<comment type="function">
    <text evidence="1">Involved in the restart of stalled replication forks, which reloads the replicative helicase on sites other than the origin of replication; the PriA-PriB pathway is the major replication restart pathway. During primosome assembly it facilitates complex formation between PriA and DnaT on DNA; stabilizes PriA on DNA. Stimulates the DNA unwinding activity of PriA helicase.</text>
</comment>
<comment type="subunit">
    <text evidence="1">Homodimer. Interacts with PriA and DnaT. Component of the replication restart primosome. Primosome assembly occurs via a 'hand-off' mechanism. PriA binds to replication forks, subsequently PriB then DnaT bind; DnaT then displaces ssDNA to generate the helicase loading substrate.</text>
</comment>
<comment type="similarity">
    <text evidence="1">Belongs to the PriB family.</text>
</comment>
<keyword id="KW-0002">3D-structure</keyword>
<keyword id="KW-0235">DNA replication</keyword>
<keyword id="KW-0238">DNA-binding</keyword>
<keyword id="KW-0639">Primosome</keyword>
<feature type="chain" id="PRO_0000199049" description="Replication restart protein PriB">
    <location>
        <begin position="1"/>
        <end position="107"/>
    </location>
</feature>
<feature type="domain" description="SSB" evidence="1">
    <location>
        <begin position="1"/>
        <end position="97"/>
    </location>
</feature>
<feature type="strand" evidence="3">
    <location>
        <begin position="2"/>
        <end position="13"/>
    </location>
</feature>
<feature type="strand" evidence="3">
    <location>
        <begin position="24"/>
        <end position="35"/>
    </location>
</feature>
<feature type="strand" evidence="3">
    <location>
        <begin position="44"/>
        <end position="54"/>
    </location>
</feature>
<feature type="helix" evidence="3">
    <location>
        <begin position="56"/>
        <end position="61"/>
    </location>
</feature>
<feature type="strand" evidence="3">
    <location>
        <begin position="69"/>
        <end position="80"/>
    </location>
</feature>
<feature type="strand" evidence="3">
    <location>
        <begin position="84"/>
        <end position="95"/>
    </location>
</feature>
<organism>
    <name type="scientific">Bordetella parapertussis (strain 12822 / ATCC BAA-587 / NCTC 13253)</name>
    <dbReference type="NCBI Taxonomy" id="257311"/>
    <lineage>
        <taxon>Bacteria</taxon>
        <taxon>Pseudomonadati</taxon>
        <taxon>Pseudomonadota</taxon>
        <taxon>Betaproteobacteria</taxon>
        <taxon>Burkholderiales</taxon>
        <taxon>Alcaligenaceae</taxon>
        <taxon>Bordetella</taxon>
    </lineage>
</organism>
<evidence type="ECO:0000255" key="1">
    <source>
        <dbReference type="HAMAP-Rule" id="MF_00720"/>
    </source>
</evidence>
<evidence type="ECO:0007744" key="2">
    <source>
        <dbReference type="PDB" id="3FHW"/>
    </source>
</evidence>
<evidence type="ECO:0007829" key="3">
    <source>
        <dbReference type="PDB" id="3FHW"/>
    </source>
</evidence>
<dbReference type="EMBL" id="BX640430">
    <property type="protein sequence ID" value="CAE37762.1"/>
    <property type="molecule type" value="Genomic_DNA"/>
</dbReference>
<dbReference type="RefSeq" id="WP_003813095.1">
    <property type="nucleotide sequence ID" value="NC_002928.3"/>
</dbReference>
<dbReference type="PDB" id="3FHW">
    <property type="method" value="X-ray"/>
    <property type="resolution" value="1.90 A"/>
    <property type="chains" value="A/B=1-107"/>
</dbReference>
<dbReference type="PDBsum" id="3FHW"/>
<dbReference type="SMR" id="P67675"/>
<dbReference type="GeneID" id="93204251"/>
<dbReference type="KEGG" id="bpa:BPP2467"/>
<dbReference type="HOGENOM" id="CLU_166075_1_2_4"/>
<dbReference type="EvolutionaryTrace" id="P67675"/>
<dbReference type="Proteomes" id="UP000001421">
    <property type="component" value="Chromosome"/>
</dbReference>
<dbReference type="GO" id="GO:1990077">
    <property type="term" value="C:primosome complex"/>
    <property type="evidence" value="ECO:0007669"/>
    <property type="project" value="UniProtKB-KW"/>
</dbReference>
<dbReference type="GO" id="GO:0003697">
    <property type="term" value="F:single-stranded DNA binding"/>
    <property type="evidence" value="ECO:0007669"/>
    <property type="project" value="UniProtKB-UniRule"/>
</dbReference>
<dbReference type="GO" id="GO:0006269">
    <property type="term" value="P:DNA replication, synthesis of primer"/>
    <property type="evidence" value="ECO:0007669"/>
    <property type="project" value="UniProtKB-KW"/>
</dbReference>
<dbReference type="Gene3D" id="2.40.50.140">
    <property type="entry name" value="Nucleic acid-binding proteins"/>
    <property type="match status" value="1"/>
</dbReference>
<dbReference type="HAMAP" id="MF_00720">
    <property type="entry name" value="PriB"/>
    <property type="match status" value="1"/>
</dbReference>
<dbReference type="InterPro" id="IPR012340">
    <property type="entry name" value="NA-bd_OB-fold"/>
</dbReference>
<dbReference type="InterPro" id="IPR000424">
    <property type="entry name" value="Primosome_PriB/ssb"/>
</dbReference>
<dbReference type="InterPro" id="IPR023646">
    <property type="entry name" value="Prisomal_replication_PriB"/>
</dbReference>
<dbReference type="NCBIfam" id="TIGR04418">
    <property type="entry name" value="PriB_gamma"/>
    <property type="match status" value="1"/>
</dbReference>
<dbReference type="Pfam" id="PF22657">
    <property type="entry name" value="SSB_1"/>
    <property type="match status" value="1"/>
</dbReference>
<dbReference type="PIRSF" id="PIRSF003135">
    <property type="entry name" value="Primosomal_n"/>
    <property type="match status" value="1"/>
</dbReference>
<dbReference type="SUPFAM" id="SSF50249">
    <property type="entry name" value="Nucleic acid-binding proteins"/>
    <property type="match status" value="1"/>
</dbReference>
<dbReference type="PROSITE" id="PS50935">
    <property type="entry name" value="SSB"/>
    <property type="match status" value="1"/>
</dbReference>
<name>PRIB_BORPA</name>
<reference key="1">
    <citation type="journal article" date="2003" name="Nat. Genet.">
        <title>Comparative analysis of the genome sequences of Bordetella pertussis, Bordetella parapertussis and Bordetella bronchiseptica.</title>
        <authorList>
            <person name="Parkhill J."/>
            <person name="Sebaihia M."/>
            <person name="Preston A."/>
            <person name="Murphy L.D."/>
            <person name="Thomson N.R."/>
            <person name="Harris D.E."/>
            <person name="Holden M.T.G."/>
            <person name="Churcher C.M."/>
            <person name="Bentley S.D."/>
            <person name="Mungall K.L."/>
            <person name="Cerdeno-Tarraga A.-M."/>
            <person name="Temple L."/>
            <person name="James K.D."/>
            <person name="Harris B."/>
            <person name="Quail M.A."/>
            <person name="Achtman M."/>
            <person name="Atkin R."/>
            <person name="Baker S."/>
            <person name="Basham D."/>
            <person name="Bason N."/>
            <person name="Cherevach I."/>
            <person name="Chillingworth T."/>
            <person name="Collins M."/>
            <person name="Cronin A."/>
            <person name="Davis P."/>
            <person name="Doggett J."/>
            <person name="Feltwell T."/>
            <person name="Goble A."/>
            <person name="Hamlin N."/>
            <person name="Hauser H."/>
            <person name="Holroyd S."/>
            <person name="Jagels K."/>
            <person name="Leather S."/>
            <person name="Moule S."/>
            <person name="Norberczak H."/>
            <person name="O'Neil S."/>
            <person name="Ormond D."/>
            <person name="Price C."/>
            <person name="Rabbinowitsch E."/>
            <person name="Rutter S."/>
            <person name="Sanders M."/>
            <person name="Saunders D."/>
            <person name="Seeger K."/>
            <person name="Sharp S."/>
            <person name="Simmonds M."/>
            <person name="Skelton J."/>
            <person name="Squares R."/>
            <person name="Squares S."/>
            <person name="Stevens K."/>
            <person name="Unwin L."/>
            <person name="Whitehead S."/>
            <person name="Barrell B.G."/>
            <person name="Maskell D.J."/>
        </authorList>
    </citation>
    <scope>NUCLEOTIDE SEQUENCE [LARGE SCALE GENOMIC DNA]</scope>
    <source>
        <strain>12822 / ATCC BAA-587 / NCTC 13253</strain>
    </source>
</reference>
<reference evidence="2" key="2">
    <citation type="submission" date="2008-12" db="PDB data bank">
        <title>Crystal structure of the protein PriB from Bordetella parapertussis. Northeast structural genomics consortium target bpr162.</title>
        <authorList>
            <person name="Kuzin A.P."/>
            <person name="Neely P.H."/>
            <person name="Seetharaman J."/>
            <person name="Forouhar F."/>
            <person name="Wang D."/>
            <person name="Mao L."/>
            <person name="Maglaqui M."/>
            <person name="Xiao R."/>
            <person name="Liu J."/>
            <person name="Baran M.C."/>
            <person name="Acton T.B."/>
            <person name="Rost B."/>
            <person name="Montelione G.T."/>
            <person name="Hunt J.F."/>
            <person name="Tong L."/>
        </authorList>
    </citation>
    <scope>X-RAY CRYSTALLOGRAPHY (1.90 ANGSTROMS)</scope>
</reference>
<sequence>MNTLELSARVLECGAMRHTPAGLPALELLLVHESEVVEAGHPRRVELTISAVALGDLALLLADTPLGTEMQVQGFLAPARKDSVKVKLHLQQARRIAGSMGRDPLVG</sequence>
<gene>
    <name evidence="1" type="primary">priB</name>
    <name type="ordered locus">BPP2467</name>
</gene>
<protein>
    <recommendedName>
        <fullName evidence="1">Replication restart protein PriB</fullName>
    </recommendedName>
</protein>
<proteinExistence type="evidence at protein level"/>
<accession>P67675</accession>
<accession>Q7VV90</accession>
<accession>Q7W7P7</accession>
<accession>Q7WL34</accession>